<comment type="function">
    <text evidence="9 10 11 12 13">Histone methyltransferase that specifically trimethylates 'Lys-9' of histone H3 using monomethylated H3 'Lys-9' as substrate. H3 'Lys-9' trimethylation represents a specific tag for epigenetic transcriptional repression by recruiting HP1 (CBX1, CBX3 and/or CBX5) proteins to methylated histones. Mainly functions in heterochromatin regions, thereby playing a central role in the establishment of constitutive heterochromatin at pericentric and telomere regions. H3 'Lys-9' trimethylation is also required to direct DNA methylation at pericentric repeats. SUV39H1 is targeted to histone H3 via its interaction with RB1 and is involved in many processes, such as cell cycle regulation, transcriptional repression and regulation of telomere length. May participate in regulation of higher-order chromatin organization during spermatogenesis. Recruited by the large PER complex to the E-box elements of the circadian target genes such as PER2 itself or PER1, contributes to the conversion of local chromatin to a heterochromatin-like repressive state through H3 'Lys-9' trimethylation.</text>
</comment>
<comment type="catalytic activity">
    <reaction evidence="7">
        <text>L-lysyl(9)-[histone H3] + 3 S-adenosyl-L-methionine = N(6),N(6),N(6)-trimethyl-L-lysyl(9)-[histone H3] + 3 S-adenosyl-L-homocysteine + 3 H(+)</text>
        <dbReference type="Rhea" id="RHEA:60276"/>
        <dbReference type="Rhea" id="RHEA-COMP:15538"/>
        <dbReference type="Rhea" id="RHEA-COMP:15546"/>
        <dbReference type="ChEBI" id="CHEBI:15378"/>
        <dbReference type="ChEBI" id="CHEBI:29969"/>
        <dbReference type="ChEBI" id="CHEBI:57856"/>
        <dbReference type="ChEBI" id="CHEBI:59789"/>
        <dbReference type="ChEBI" id="CHEBI:61961"/>
        <dbReference type="EC" id="2.1.1.355"/>
    </reaction>
</comment>
<comment type="subunit">
    <text>Interacts with SMAD5. The large PER complex involved in the histone methylation is composed of at least PER2, CBX3, TRIM28, SUV39H1 and/or SUV39H2; CBX3 mediates the formation of the complex.</text>
</comment>
<comment type="subcellular location">
    <subcellularLocation>
        <location evidence="2">Nucleus</location>
    </subcellularLocation>
    <subcellularLocation>
        <location>Chromosome</location>
    </subcellularLocation>
    <subcellularLocation>
        <location>Chromosome</location>
        <location>Centromere</location>
    </subcellularLocation>
    <text>Associates with centromeric constitutive heterochromatin during most stages of spermato- and spermiogenesis. Predominantly accumulates at the sex chromosomes present at the XY body.</text>
</comment>
<comment type="tissue specificity">
    <text>Testis specific; predominant expression in type B spermatogonia and preleptotene spermatocytes.</text>
</comment>
<comment type="developmental stage">
    <text>Strong expression in early embryos with a peak at 10.5 dpc. Expression is down-regulated at 17.5 dpc, and is nearly absent during postnatal development. In adult testes, prominent expression in late but not early spermatocytes.</text>
</comment>
<comment type="domain">
    <text evidence="1">Although the SET domain contains the active site of enzymatic activity, both pre-SET and post-SET domains are required for methyltransferase activity. The SET domain also participates in stable binding to heterochromatin (By similarity).</text>
</comment>
<comment type="domain">
    <text evidence="1">In the pre-SET domain, Cys residues bind 3 zinc ions that are arranged in a triangular cluster; some of these Cys residues contribute to the binding of two zinc ions within the cluster.</text>
</comment>
<comment type="PTM">
    <text evidence="14">Ubiquitinated by the DCX(DCAF13) E3 ubiquitin ligase complex, leading to its degradation.</text>
</comment>
<comment type="disruption phenotype">
    <text evidence="9">Mice lacking Suv39h1 and Suv39h2 display severely impaired viability and chromosomal instabilities that are associated with an increased tumor risk and perturbed chromosome interactions during male meiosis. They also show a higher level of histone H3 with phosphorylated 'Ser-10' and a reduced number of cells in G1 phase and an increased portion of cells with aberrant nuclear morphologies.</text>
</comment>
<comment type="similarity">
    <text evidence="7">Belongs to the class V-like SAM-binding methyltransferase superfamily. Histone-lysine methyltransferase family. Suvar3-9 subfamily.</text>
</comment>
<comment type="sequence caution" evidence="15">
    <conflict type="erroneous gene model prediction">
        <sequence resource="EMBL-CDS" id="AAF73152"/>
    </conflict>
</comment>
<accession>Q9EQQ0</accession>
<accession>Q8BNK2</accession>
<accession>Q9CUK3</accession>
<accession>Q9JLP7</accession>
<evidence type="ECO:0000250" key="1"/>
<evidence type="ECO:0000250" key="2">
    <source>
        <dbReference type="UniProtKB" id="Q9H5I1"/>
    </source>
</evidence>
<evidence type="ECO:0000255" key="3">
    <source>
        <dbReference type="PROSITE-ProRule" id="PRU00053"/>
    </source>
</evidence>
<evidence type="ECO:0000255" key="4">
    <source>
        <dbReference type="PROSITE-ProRule" id="PRU00155"/>
    </source>
</evidence>
<evidence type="ECO:0000255" key="5">
    <source>
        <dbReference type="PROSITE-ProRule" id="PRU00157"/>
    </source>
</evidence>
<evidence type="ECO:0000255" key="6">
    <source>
        <dbReference type="PROSITE-ProRule" id="PRU00190"/>
    </source>
</evidence>
<evidence type="ECO:0000255" key="7">
    <source>
        <dbReference type="PROSITE-ProRule" id="PRU00912"/>
    </source>
</evidence>
<evidence type="ECO:0000256" key="8">
    <source>
        <dbReference type="SAM" id="MobiDB-lite"/>
    </source>
</evidence>
<evidence type="ECO:0000269" key="9">
    <source>
    </source>
</evidence>
<evidence type="ECO:0000269" key="10">
    <source>
    </source>
</evidence>
<evidence type="ECO:0000269" key="11">
    <source>
    </source>
</evidence>
<evidence type="ECO:0000269" key="12">
    <source>
    </source>
</evidence>
<evidence type="ECO:0000269" key="13">
    <source>
    </source>
</evidence>
<evidence type="ECO:0000269" key="14">
    <source>
    </source>
</evidence>
<evidence type="ECO:0000305" key="15"/>
<evidence type="ECO:0007744" key="16">
    <source>
    </source>
</evidence>
<name>SUV92_MOUSE</name>
<feature type="chain" id="PRO_0000186060" description="Histone-lysine N-methyltransferase SUV39H2">
    <location>
        <begin position="1"/>
        <end position="477"/>
    </location>
</feature>
<feature type="domain" description="Chromo" evidence="3">
    <location>
        <begin position="118"/>
        <end position="176"/>
    </location>
</feature>
<feature type="domain" description="Pre-SET" evidence="5">
    <location>
        <begin position="256"/>
        <end position="314"/>
    </location>
</feature>
<feature type="domain" description="SET" evidence="6">
    <location>
        <begin position="317"/>
        <end position="440"/>
    </location>
</feature>
<feature type="domain" description="Post-SET" evidence="4">
    <location>
        <begin position="461"/>
        <end position="477"/>
    </location>
</feature>
<feature type="region of interest" description="Disordered" evidence="8">
    <location>
        <begin position="1"/>
        <end position="59"/>
    </location>
</feature>
<feature type="compositionally biased region" description="Basic residues" evidence="8">
    <location>
        <begin position="27"/>
        <end position="37"/>
    </location>
</feature>
<feature type="binding site" evidence="1">
    <location>
        <position position="258"/>
    </location>
    <ligand>
        <name>Zn(2+)</name>
        <dbReference type="ChEBI" id="CHEBI:29105"/>
        <label>1</label>
    </ligand>
</feature>
<feature type="binding site" evidence="1">
    <location>
        <position position="258"/>
    </location>
    <ligand>
        <name>Zn(2+)</name>
        <dbReference type="ChEBI" id="CHEBI:29105"/>
        <label>2</label>
    </ligand>
</feature>
<feature type="binding site" evidence="1">
    <location>
        <position position="260"/>
    </location>
    <ligand>
        <name>Zn(2+)</name>
        <dbReference type="ChEBI" id="CHEBI:29105"/>
        <label>1</label>
    </ligand>
</feature>
<feature type="binding site" evidence="1">
    <location>
        <position position="263"/>
    </location>
    <ligand>
        <name>Zn(2+)</name>
        <dbReference type="ChEBI" id="CHEBI:29105"/>
        <label>1</label>
    </ligand>
</feature>
<feature type="binding site" evidence="1">
    <location>
        <position position="263"/>
    </location>
    <ligand>
        <name>Zn(2+)</name>
        <dbReference type="ChEBI" id="CHEBI:29105"/>
        <label>3</label>
    </ligand>
</feature>
<feature type="binding site" evidence="1">
    <location>
        <position position="268"/>
    </location>
    <ligand>
        <name>Zn(2+)</name>
        <dbReference type="ChEBI" id="CHEBI:29105"/>
        <label>1</label>
    </ligand>
</feature>
<feature type="binding site" evidence="1">
    <location>
        <position position="269"/>
    </location>
    <ligand>
        <name>Zn(2+)</name>
        <dbReference type="ChEBI" id="CHEBI:29105"/>
        <label>1</label>
    </ligand>
</feature>
<feature type="binding site" evidence="1">
    <location>
        <position position="269"/>
    </location>
    <ligand>
        <name>Zn(2+)</name>
        <dbReference type="ChEBI" id="CHEBI:29105"/>
        <label>2</label>
    </ligand>
</feature>
<feature type="binding site" evidence="1">
    <location>
        <position position="296"/>
    </location>
    <ligand>
        <name>Zn(2+)</name>
        <dbReference type="ChEBI" id="CHEBI:29105"/>
        <label>2</label>
    </ligand>
</feature>
<feature type="binding site" evidence="1">
    <location>
        <position position="296"/>
    </location>
    <ligand>
        <name>Zn(2+)</name>
        <dbReference type="ChEBI" id="CHEBI:29105"/>
        <label>3</label>
    </ligand>
</feature>
<feature type="binding site" evidence="1">
    <location>
        <position position="300"/>
    </location>
    <ligand>
        <name>Zn(2+)</name>
        <dbReference type="ChEBI" id="CHEBI:29105"/>
        <label>2</label>
    </ligand>
</feature>
<feature type="binding site" evidence="1">
    <location>
        <position position="302"/>
    </location>
    <ligand>
        <name>Zn(2+)</name>
        <dbReference type="ChEBI" id="CHEBI:29105"/>
        <label>3</label>
    </ligand>
</feature>
<feature type="binding site" evidence="1">
    <location>
        <position position="306"/>
    </location>
    <ligand>
        <name>Zn(2+)</name>
        <dbReference type="ChEBI" id="CHEBI:29105"/>
        <label>3</label>
    </ligand>
</feature>
<feature type="binding site" evidence="1">
    <location>
        <begin position="328"/>
        <end position="330"/>
    </location>
    <ligand>
        <name>S-adenosyl-L-methionine</name>
        <dbReference type="ChEBI" id="CHEBI:59789"/>
    </ligand>
</feature>
<feature type="binding site" evidence="6">
    <location>
        <position position="371"/>
    </location>
    <ligand>
        <name>S-adenosyl-L-methionine</name>
        <dbReference type="ChEBI" id="CHEBI:59789"/>
    </ligand>
</feature>
<feature type="binding site" evidence="1">
    <location>
        <begin position="397"/>
        <end position="398"/>
    </location>
    <ligand>
        <name>S-adenosyl-L-methionine</name>
        <dbReference type="ChEBI" id="CHEBI:59789"/>
    </ligand>
</feature>
<feature type="binding site" evidence="1">
    <location>
        <position position="400"/>
    </location>
    <ligand>
        <name>Zn(2+)</name>
        <dbReference type="ChEBI" id="CHEBI:29105"/>
        <label>4</label>
    </ligand>
</feature>
<feature type="binding site" evidence="1">
    <location>
        <position position="465"/>
    </location>
    <ligand>
        <name>Zn(2+)</name>
        <dbReference type="ChEBI" id="CHEBI:29105"/>
        <label>4</label>
    </ligand>
</feature>
<feature type="binding site" evidence="1">
    <location>
        <position position="467"/>
    </location>
    <ligand>
        <name>Zn(2+)</name>
        <dbReference type="ChEBI" id="CHEBI:29105"/>
        <label>4</label>
    </ligand>
</feature>
<feature type="binding site" evidence="1">
    <location>
        <position position="472"/>
    </location>
    <ligand>
        <name>Zn(2+)</name>
        <dbReference type="ChEBI" id="CHEBI:29105"/>
        <label>4</label>
    </ligand>
</feature>
<feature type="modified residue" description="Phosphoserine" evidence="2">
    <location>
        <position position="448"/>
    </location>
</feature>
<feature type="modified residue" description="Phosphoserine" evidence="2">
    <location>
        <position position="451"/>
    </location>
</feature>
<feature type="modified residue" description="Phosphoserine" evidence="16">
    <location>
        <position position="455"/>
    </location>
</feature>
<feature type="sequence conflict" description="In Ref. 2; BAC38921." evidence="15" ref="2">
    <original>T</original>
    <variation>A</variation>
    <location>
        <position position="3"/>
    </location>
</feature>
<feature type="sequence conflict" description="In Ref. 1; AAF73152." evidence="15" ref="1">
    <location>
        <position position="131"/>
    </location>
</feature>
<feature type="sequence conflict" description="In Ref. 2; BAB29948/BAC38921." evidence="15" ref="2">
    <original>K</original>
    <variation>R</variation>
    <location>
        <position position="323"/>
    </location>
</feature>
<feature type="sequence conflict" description="In Ref. 1; AAF73152." evidence="15" ref="1">
    <original>S</original>
    <variation>N</variation>
    <location>
        <position position="325"/>
    </location>
</feature>
<dbReference type="EC" id="2.1.1.355"/>
<dbReference type="EMBL" id="AF149204">
    <property type="protein sequence ID" value="AAF73152.1"/>
    <property type="status" value="ALT_SEQ"/>
    <property type="molecule type" value="Genomic_DNA"/>
</dbReference>
<dbReference type="EMBL" id="AF149205">
    <property type="protein sequence ID" value="AAG09134.1"/>
    <property type="molecule type" value="mRNA"/>
</dbReference>
<dbReference type="EMBL" id="AK015728">
    <property type="protein sequence ID" value="BAB29948.1"/>
    <property type="molecule type" value="mRNA"/>
</dbReference>
<dbReference type="EMBL" id="AK083457">
    <property type="protein sequence ID" value="BAC38921.1"/>
    <property type="molecule type" value="mRNA"/>
</dbReference>
<dbReference type="EMBL" id="AL732620">
    <property type="status" value="NOT_ANNOTATED_CDS"/>
    <property type="molecule type" value="Genomic_DNA"/>
</dbReference>
<dbReference type="CCDS" id="CCDS15652.1"/>
<dbReference type="RefSeq" id="NP_073561.2">
    <property type="nucleotide sequence ID" value="NM_022724.4"/>
</dbReference>
<dbReference type="SMR" id="Q9EQQ0"/>
<dbReference type="BioGRID" id="211103">
    <property type="interactions" value="2"/>
</dbReference>
<dbReference type="CORUM" id="Q9EQQ0"/>
<dbReference type="DIP" id="DIP-32586N"/>
<dbReference type="FunCoup" id="Q9EQQ0">
    <property type="interactions" value="2349"/>
</dbReference>
<dbReference type="IntAct" id="Q9EQQ0">
    <property type="interactions" value="3"/>
</dbReference>
<dbReference type="STRING" id="10090.ENSMUSP00000027956"/>
<dbReference type="iPTMnet" id="Q9EQQ0"/>
<dbReference type="PhosphoSitePlus" id="Q9EQQ0"/>
<dbReference type="PaxDb" id="10090-ENSMUSP00000027956"/>
<dbReference type="PeptideAtlas" id="Q9EQQ0"/>
<dbReference type="ProteomicsDB" id="258674"/>
<dbReference type="DNASU" id="64707"/>
<dbReference type="GeneID" id="64707"/>
<dbReference type="KEGG" id="mmu:64707"/>
<dbReference type="UCSC" id="uc008ied.2">
    <property type="organism name" value="mouse"/>
</dbReference>
<dbReference type="AGR" id="MGI:1890396"/>
<dbReference type="CTD" id="79723"/>
<dbReference type="MGI" id="MGI:1890396">
    <property type="gene designation" value="Suv39h2"/>
</dbReference>
<dbReference type="eggNOG" id="KOG1082">
    <property type="taxonomic scope" value="Eukaryota"/>
</dbReference>
<dbReference type="InParanoid" id="Q9EQQ0"/>
<dbReference type="OrthoDB" id="308383at2759"/>
<dbReference type="PhylomeDB" id="Q9EQQ0"/>
<dbReference type="TreeFam" id="TF106452"/>
<dbReference type="Reactome" id="R-MMU-3214841">
    <property type="pathway name" value="PKMTs methylate histone lysines"/>
</dbReference>
<dbReference type="BioGRID-ORCS" id="64707">
    <property type="hits" value="5 hits in 81 CRISPR screens"/>
</dbReference>
<dbReference type="PRO" id="PR:Q9EQQ0"/>
<dbReference type="Proteomes" id="UP000000589">
    <property type="component" value="Unplaced"/>
</dbReference>
<dbReference type="RNAct" id="Q9EQQ0">
    <property type="molecule type" value="protein"/>
</dbReference>
<dbReference type="GO" id="GO:0000785">
    <property type="term" value="C:chromatin"/>
    <property type="evidence" value="ECO:0000250"/>
    <property type="project" value="UniProtKB"/>
</dbReference>
<dbReference type="GO" id="GO:0000775">
    <property type="term" value="C:chromosome, centromeric region"/>
    <property type="evidence" value="ECO:0007669"/>
    <property type="project" value="UniProtKB-SubCell"/>
</dbReference>
<dbReference type="GO" id="GO:0000792">
    <property type="term" value="C:heterochromatin"/>
    <property type="evidence" value="ECO:0000314"/>
    <property type="project" value="MGI"/>
</dbReference>
<dbReference type="GO" id="GO:0005634">
    <property type="term" value="C:nucleus"/>
    <property type="evidence" value="ECO:0000314"/>
    <property type="project" value="MGI"/>
</dbReference>
<dbReference type="GO" id="GO:0003682">
    <property type="term" value="F:chromatin binding"/>
    <property type="evidence" value="ECO:0000314"/>
    <property type="project" value="UniProtKB"/>
</dbReference>
<dbReference type="GO" id="GO:0140938">
    <property type="term" value="F:histone H3 methyltransferase activity"/>
    <property type="evidence" value="ECO:0000314"/>
    <property type="project" value="UniProtKB"/>
</dbReference>
<dbReference type="GO" id="GO:0046974">
    <property type="term" value="F:histone H3K9 methyltransferase activity"/>
    <property type="evidence" value="ECO:0000316"/>
    <property type="project" value="MGI"/>
</dbReference>
<dbReference type="GO" id="GO:0140949">
    <property type="term" value="F:histone H3K9 trimethyltransferase activity"/>
    <property type="evidence" value="ECO:0007669"/>
    <property type="project" value="UniProtKB-EC"/>
</dbReference>
<dbReference type="GO" id="GO:0140947">
    <property type="term" value="F:histone H3K9me2 methyltransferase activity"/>
    <property type="evidence" value="ECO:0000316"/>
    <property type="project" value="MGI"/>
</dbReference>
<dbReference type="GO" id="GO:0008276">
    <property type="term" value="F:protein methyltransferase activity"/>
    <property type="evidence" value="ECO:0000314"/>
    <property type="project" value="MGI"/>
</dbReference>
<dbReference type="GO" id="GO:0000977">
    <property type="term" value="F:RNA polymerase II transcription regulatory region sequence-specific DNA binding"/>
    <property type="evidence" value="ECO:0000314"/>
    <property type="project" value="MGI"/>
</dbReference>
<dbReference type="GO" id="GO:0000976">
    <property type="term" value="F:transcription cis-regulatory region binding"/>
    <property type="evidence" value="ECO:0000314"/>
    <property type="project" value="UniProtKB"/>
</dbReference>
<dbReference type="GO" id="GO:0008270">
    <property type="term" value="F:zinc ion binding"/>
    <property type="evidence" value="ECO:0007669"/>
    <property type="project" value="InterPro"/>
</dbReference>
<dbReference type="GO" id="GO:0030154">
    <property type="term" value="P:cell differentiation"/>
    <property type="evidence" value="ECO:0007669"/>
    <property type="project" value="UniProtKB-KW"/>
</dbReference>
<dbReference type="GO" id="GO:0071456">
    <property type="term" value="P:cellular response to hypoxia"/>
    <property type="evidence" value="ECO:0000266"/>
    <property type="project" value="MGI"/>
</dbReference>
<dbReference type="GO" id="GO:0006325">
    <property type="term" value="P:chromatin organization"/>
    <property type="evidence" value="ECO:0000250"/>
    <property type="project" value="UniProtKB"/>
</dbReference>
<dbReference type="GO" id="GO:0006338">
    <property type="term" value="P:chromatin remodeling"/>
    <property type="evidence" value="ECO:0000250"/>
    <property type="project" value="UniProtKB"/>
</dbReference>
<dbReference type="GO" id="GO:0007623">
    <property type="term" value="P:circadian rhythm"/>
    <property type="evidence" value="ECO:0000315"/>
    <property type="project" value="UniProtKB"/>
</dbReference>
<dbReference type="GO" id="GO:0007140">
    <property type="term" value="P:male meiotic nuclear division"/>
    <property type="evidence" value="ECO:0000270"/>
    <property type="project" value="UniProtKB"/>
</dbReference>
<dbReference type="GO" id="GO:0032259">
    <property type="term" value="P:methylation"/>
    <property type="evidence" value="ECO:0007669"/>
    <property type="project" value="UniProtKB-KW"/>
</dbReference>
<dbReference type="GO" id="GO:0045892">
    <property type="term" value="P:negative regulation of DNA-templated transcription"/>
    <property type="evidence" value="ECO:0000315"/>
    <property type="project" value="UniProtKB"/>
</dbReference>
<dbReference type="GO" id="GO:0045814">
    <property type="term" value="P:negative regulation of gene expression, epigenetic"/>
    <property type="evidence" value="ECO:0000315"/>
    <property type="project" value="UniProtKB"/>
</dbReference>
<dbReference type="GO" id="GO:0000122">
    <property type="term" value="P:negative regulation of transcription by RNA polymerase II"/>
    <property type="evidence" value="ECO:0000266"/>
    <property type="project" value="MGI"/>
</dbReference>
<dbReference type="CDD" id="cd18639">
    <property type="entry name" value="CD_SUV39H1_like"/>
    <property type="match status" value="1"/>
</dbReference>
<dbReference type="CDD" id="cd10532">
    <property type="entry name" value="SET_SUV39H2"/>
    <property type="match status" value="1"/>
</dbReference>
<dbReference type="FunFam" id="2.170.270.10:FF:000008">
    <property type="entry name" value="Histone-lysine N-methyltransferase"/>
    <property type="match status" value="1"/>
</dbReference>
<dbReference type="FunFam" id="2.40.50.40:FF:000016">
    <property type="entry name" value="Histone-lysine N-methyltransferase"/>
    <property type="match status" value="1"/>
</dbReference>
<dbReference type="Gene3D" id="2.40.50.40">
    <property type="match status" value="1"/>
</dbReference>
<dbReference type="Gene3D" id="2.170.270.10">
    <property type="entry name" value="SET domain"/>
    <property type="match status" value="1"/>
</dbReference>
<dbReference type="InterPro" id="IPR016197">
    <property type="entry name" value="Chromo-like_dom_sf"/>
</dbReference>
<dbReference type="InterPro" id="IPR000953">
    <property type="entry name" value="Chromo/chromo_shadow_dom"/>
</dbReference>
<dbReference type="InterPro" id="IPR023780">
    <property type="entry name" value="Chromo_domain"/>
</dbReference>
<dbReference type="InterPro" id="IPR023779">
    <property type="entry name" value="Chromodomain_CS"/>
</dbReference>
<dbReference type="InterPro" id="IPR011381">
    <property type="entry name" value="H3-K9_MeTrfase_SUV39H1/2-like"/>
</dbReference>
<dbReference type="InterPro" id="IPR050973">
    <property type="entry name" value="H3K9_Histone-Lys_N-MTase"/>
</dbReference>
<dbReference type="InterPro" id="IPR003616">
    <property type="entry name" value="Post-SET_dom"/>
</dbReference>
<dbReference type="InterPro" id="IPR007728">
    <property type="entry name" value="Pre-SET_dom"/>
</dbReference>
<dbReference type="InterPro" id="IPR001214">
    <property type="entry name" value="SET_dom"/>
</dbReference>
<dbReference type="InterPro" id="IPR046341">
    <property type="entry name" value="SET_dom_sf"/>
</dbReference>
<dbReference type="PANTHER" id="PTHR46223">
    <property type="entry name" value="HISTONE-LYSINE N-METHYLTRANSFERASE SUV39H"/>
    <property type="match status" value="1"/>
</dbReference>
<dbReference type="PANTHER" id="PTHR46223:SF2">
    <property type="entry name" value="HISTONE-LYSINE N-METHYLTRANSFERASE SUV39H2"/>
    <property type="match status" value="1"/>
</dbReference>
<dbReference type="Pfam" id="PF00385">
    <property type="entry name" value="Chromo"/>
    <property type="match status" value="1"/>
</dbReference>
<dbReference type="Pfam" id="PF05033">
    <property type="entry name" value="Pre-SET"/>
    <property type="match status" value="1"/>
</dbReference>
<dbReference type="Pfam" id="PF00856">
    <property type="entry name" value="SET"/>
    <property type="match status" value="1"/>
</dbReference>
<dbReference type="PIRSF" id="PIRSF009343">
    <property type="entry name" value="SUV39_SET"/>
    <property type="match status" value="1"/>
</dbReference>
<dbReference type="SMART" id="SM00298">
    <property type="entry name" value="CHROMO"/>
    <property type="match status" value="1"/>
</dbReference>
<dbReference type="SMART" id="SM00508">
    <property type="entry name" value="PostSET"/>
    <property type="match status" value="1"/>
</dbReference>
<dbReference type="SMART" id="SM00468">
    <property type="entry name" value="PreSET"/>
    <property type="match status" value="1"/>
</dbReference>
<dbReference type="SMART" id="SM00317">
    <property type="entry name" value="SET"/>
    <property type="match status" value="1"/>
</dbReference>
<dbReference type="SUPFAM" id="SSF54160">
    <property type="entry name" value="Chromo domain-like"/>
    <property type="match status" value="1"/>
</dbReference>
<dbReference type="SUPFAM" id="SSF82199">
    <property type="entry name" value="SET domain"/>
    <property type="match status" value="1"/>
</dbReference>
<dbReference type="PROSITE" id="PS00598">
    <property type="entry name" value="CHROMO_1"/>
    <property type="match status" value="1"/>
</dbReference>
<dbReference type="PROSITE" id="PS50013">
    <property type="entry name" value="CHROMO_2"/>
    <property type="match status" value="1"/>
</dbReference>
<dbReference type="PROSITE" id="PS50868">
    <property type="entry name" value="POST_SET"/>
    <property type="match status" value="1"/>
</dbReference>
<dbReference type="PROSITE" id="PS50867">
    <property type="entry name" value="PRE_SET"/>
    <property type="match status" value="1"/>
</dbReference>
<dbReference type="PROSITE" id="PS51579">
    <property type="entry name" value="SAM_MT43_SUVAR39_3"/>
    <property type="match status" value="1"/>
</dbReference>
<dbReference type="PROSITE" id="PS50280">
    <property type="entry name" value="SET"/>
    <property type="match status" value="1"/>
</dbReference>
<sequence>MATARAKARGSEAGARCHRAPGPPPRPKARRTARRRRAETLTARRSRPSAGERRAGSQRAWSGAPRAAVFGDECARGALFKAWCVPCLVSLDTLQELCRKEKLTCKSIGITKRNLNNYEVEYLCDYKVAKGVEYYLVKWKGWPDSTNTWEPLRNLRCPQLLRQFSDDKKTYLAQERKCKAVNSKSLQPAIAEYIVQKAKQRIALQRWQDYLNRRKNHKGMIFVENTVDLEGPPLDFYYINEYRPAPGISINSEATFGCSCTDCFFDKCCPAEAGVVLAYNKKQQIKIQPGTPIYECNSRCRCGPECPNRIVQKGTQYSLCIFKTSNGCGWGVKTLVKIKRMSFVMEYVGEVITSEEAERRGQFYDNKGITYLFDLDYESDEFTVDAARYGNVSHFVNHSCDPNLQVFSVFIDNLDTRLPRIALFSTRTINAGEELTFDYQMKGSGEASSDSIDHSPAKKRVRTQCKCGAETCRGYLN</sequence>
<gene>
    <name type="primary">Suv39h2</name>
</gene>
<organism>
    <name type="scientific">Mus musculus</name>
    <name type="common">Mouse</name>
    <dbReference type="NCBI Taxonomy" id="10090"/>
    <lineage>
        <taxon>Eukaryota</taxon>
        <taxon>Metazoa</taxon>
        <taxon>Chordata</taxon>
        <taxon>Craniata</taxon>
        <taxon>Vertebrata</taxon>
        <taxon>Euteleostomi</taxon>
        <taxon>Mammalia</taxon>
        <taxon>Eutheria</taxon>
        <taxon>Euarchontoglires</taxon>
        <taxon>Glires</taxon>
        <taxon>Rodentia</taxon>
        <taxon>Myomorpha</taxon>
        <taxon>Muroidea</taxon>
        <taxon>Muridae</taxon>
        <taxon>Murinae</taxon>
        <taxon>Mus</taxon>
        <taxon>Mus</taxon>
    </lineage>
</organism>
<reference key="1">
    <citation type="journal article" date="2000" name="Mol. Cell. Biol.">
        <title>Isolation and characterization of Suv39h2, a second histone H3 methyltransferase gene that displays testis-specific expression.</title>
        <authorList>
            <person name="O'Carroll D."/>
            <person name="Scherthan H."/>
            <person name="Peters A.H.F.M."/>
            <person name="Opravil S."/>
            <person name="Haynes A.R."/>
            <person name="Laible G."/>
            <person name="Rea S."/>
            <person name="Schmid M."/>
            <person name="Lebersorger A."/>
            <person name="Jerratsch M."/>
            <person name="Sattler L."/>
            <person name="Mattei M.-G."/>
            <person name="Denny P."/>
            <person name="Brown S.D.M."/>
            <person name="Schweizer D."/>
            <person name="Jenuwein T."/>
        </authorList>
    </citation>
    <scope>NUCLEOTIDE SEQUENCE [GENOMIC DNA / MRNA]</scope>
    <scope>CHARACTERIZATION</scope>
    <source>
        <strain>C57BL/6J</strain>
    </source>
</reference>
<reference key="2">
    <citation type="journal article" date="2005" name="Science">
        <title>The transcriptional landscape of the mammalian genome.</title>
        <authorList>
            <person name="Carninci P."/>
            <person name="Kasukawa T."/>
            <person name="Katayama S."/>
            <person name="Gough J."/>
            <person name="Frith M.C."/>
            <person name="Maeda N."/>
            <person name="Oyama R."/>
            <person name="Ravasi T."/>
            <person name="Lenhard B."/>
            <person name="Wells C."/>
            <person name="Kodzius R."/>
            <person name="Shimokawa K."/>
            <person name="Bajic V.B."/>
            <person name="Brenner S.E."/>
            <person name="Batalov S."/>
            <person name="Forrest A.R."/>
            <person name="Zavolan M."/>
            <person name="Davis M.J."/>
            <person name="Wilming L.G."/>
            <person name="Aidinis V."/>
            <person name="Allen J.E."/>
            <person name="Ambesi-Impiombato A."/>
            <person name="Apweiler R."/>
            <person name="Aturaliya R.N."/>
            <person name="Bailey T.L."/>
            <person name="Bansal M."/>
            <person name="Baxter L."/>
            <person name="Beisel K.W."/>
            <person name="Bersano T."/>
            <person name="Bono H."/>
            <person name="Chalk A.M."/>
            <person name="Chiu K.P."/>
            <person name="Choudhary V."/>
            <person name="Christoffels A."/>
            <person name="Clutterbuck D.R."/>
            <person name="Crowe M.L."/>
            <person name="Dalla E."/>
            <person name="Dalrymple B.P."/>
            <person name="de Bono B."/>
            <person name="Della Gatta G."/>
            <person name="di Bernardo D."/>
            <person name="Down T."/>
            <person name="Engstrom P."/>
            <person name="Fagiolini M."/>
            <person name="Faulkner G."/>
            <person name="Fletcher C.F."/>
            <person name="Fukushima T."/>
            <person name="Furuno M."/>
            <person name="Futaki S."/>
            <person name="Gariboldi M."/>
            <person name="Georgii-Hemming P."/>
            <person name="Gingeras T.R."/>
            <person name="Gojobori T."/>
            <person name="Green R.E."/>
            <person name="Gustincich S."/>
            <person name="Harbers M."/>
            <person name="Hayashi Y."/>
            <person name="Hensch T.K."/>
            <person name="Hirokawa N."/>
            <person name="Hill D."/>
            <person name="Huminiecki L."/>
            <person name="Iacono M."/>
            <person name="Ikeo K."/>
            <person name="Iwama A."/>
            <person name="Ishikawa T."/>
            <person name="Jakt M."/>
            <person name="Kanapin A."/>
            <person name="Katoh M."/>
            <person name="Kawasawa Y."/>
            <person name="Kelso J."/>
            <person name="Kitamura H."/>
            <person name="Kitano H."/>
            <person name="Kollias G."/>
            <person name="Krishnan S.P."/>
            <person name="Kruger A."/>
            <person name="Kummerfeld S.K."/>
            <person name="Kurochkin I.V."/>
            <person name="Lareau L.F."/>
            <person name="Lazarevic D."/>
            <person name="Lipovich L."/>
            <person name="Liu J."/>
            <person name="Liuni S."/>
            <person name="McWilliam S."/>
            <person name="Madan Babu M."/>
            <person name="Madera M."/>
            <person name="Marchionni L."/>
            <person name="Matsuda H."/>
            <person name="Matsuzawa S."/>
            <person name="Miki H."/>
            <person name="Mignone F."/>
            <person name="Miyake S."/>
            <person name="Morris K."/>
            <person name="Mottagui-Tabar S."/>
            <person name="Mulder N."/>
            <person name="Nakano N."/>
            <person name="Nakauchi H."/>
            <person name="Ng P."/>
            <person name="Nilsson R."/>
            <person name="Nishiguchi S."/>
            <person name="Nishikawa S."/>
            <person name="Nori F."/>
            <person name="Ohara O."/>
            <person name="Okazaki Y."/>
            <person name="Orlando V."/>
            <person name="Pang K.C."/>
            <person name="Pavan W.J."/>
            <person name="Pavesi G."/>
            <person name="Pesole G."/>
            <person name="Petrovsky N."/>
            <person name="Piazza S."/>
            <person name="Reed J."/>
            <person name="Reid J.F."/>
            <person name="Ring B.Z."/>
            <person name="Ringwald M."/>
            <person name="Rost B."/>
            <person name="Ruan Y."/>
            <person name="Salzberg S.L."/>
            <person name="Sandelin A."/>
            <person name="Schneider C."/>
            <person name="Schoenbach C."/>
            <person name="Sekiguchi K."/>
            <person name="Semple C.A."/>
            <person name="Seno S."/>
            <person name="Sessa L."/>
            <person name="Sheng Y."/>
            <person name="Shibata Y."/>
            <person name="Shimada H."/>
            <person name="Shimada K."/>
            <person name="Silva D."/>
            <person name="Sinclair B."/>
            <person name="Sperling S."/>
            <person name="Stupka E."/>
            <person name="Sugiura K."/>
            <person name="Sultana R."/>
            <person name="Takenaka Y."/>
            <person name="Taki K."/>
            <person name="Tammoja K."/>
            <person name="Tan S.L."/>
            <person name="Tang S."/>
            <person name="Taylor M.S."/>
            <person name="Tegner J."/>
            <person name="Teichmann S.A."/>
            <person name="Ueda H.R."/>
            <person name="van Nimwegen E."/>
            <person name="Verardo R."/>
            <person name="Wei C.L."/>
            <person name="Yagi K."/>
            <person name="Yamanishi H."/>
            <person name="Zabarovsky E."/>
            <person name="Zhu S."/>
            <person name="Zimmer A."/>
            <person name="Hide W."/>
            <person name="Bult C."/>
            <person name="Grimmond S.M."/>
            <person name="Teasdale R.D."/>
            <person name="Liu E.T."/>
            <person name="Brusic V."/>
            <person name="Quackenbush J."/>
            <person name="Wahlestedt C."/>
            <person name="Mattick J.S."/>
            <person name="Hume D.A."/>
            <person name="Kai C."/>
            <person name="Sasaki D."/>
            <person name="Tomaru Y."/>
            <person name="Fukuda S."/>
            <person name="Kanamori-Katayama M."/>
            <person name="Suzuki M."/>
            <person name="Aoki J."/>
            <person name="Arakawa T."/>
            <person name="Iida J."/>
            <person name="Imamura K."/>
            <person name="Itoh M."/>
            <person name="Kato T."/>
            <person name="Kawaji H."/>
            <person name="Kawagashira N."/>
            <person name="Kawashima T."/>
            <person name="Kojima M."/>
            <person name="Kondo S."/>
            <person name="Konno H."/>
            <person name="Nakano K."/>
            <person name="Ninomiya N."/>
            <person name="Nishio T."/>
            <person name="Okada M."/>
            <person name="Plessy C."/>
            <person name="Shibata K."/>
            <person name="Shiraki T."/>
            <person name="Suzuki S."/>
            <person name="Tagami M."/>
            <person name="Waki K."/>
            <person name="Watahiki A."/>
            <person name="Okamura-Oho Y."/>
            <person name="Suzuki H."/>
            <person name="Kawai J."/>
            <person name="Hayashizaki Y."/>
        </authorList>
    </citation>
    <scope>NUCLEOTIDE SEQUENCE [LARGE SCALE MRNA]</scope>
    <source>
        <strain>C57BL/6J</strain>
        <tissue>Testis</tissue>
    </source>
</reference>
<reference key="3">
    <citation type="journal article" date="2009" name="PLoS Biol.">
        <title>Lineage-specific biology revealed by a finished genome assembly of the mouse.</title>
        <authorList>
            <person name="Church D.M."/>
            <person name="Goodstadt L."/>
            <person name="Hillier L.W."/>
            <person name="Zody M.C."/>
            <person name="Goldstein S."/>
            <person name="She X."/>
            <person name="Bult C.J."/>
            <person name="Agarwala R."/>
            <person name="Cherry J.L."/>
            <person name="DiCuccio M."/>
            <person name="Hlavina W."/>
            <person name="Kapustin Y."/>
            <person name="Meric P."/>
            <person name="Maglott D."/>
            <person name="Birtle Z."/>
            <person name="Marques A.C."/>
            <person name="Graves T."/>
            <person name="Zhou S."/>
            <person name="Teague B."/>
            <person name="Potamousis K."/>
            <person name="Churas C."/>
            <person name="Place M."/>
            <person name="Herschleb J."/>
            <person name="Runnheim R."/>
            <person name="Forrest D."/>
            <person name="Amos-Landgraf J."/>
            <person name="Schwartz D.C."/>
            <person name="Cheng Z."/>
            <person name="Lindblad-Toh K."/>
            <person name="Eichler E.E."/>
            <person name="Ponting C.P."/>
        </authorList>
    </citation>
    <scope>NUCLEOTIDE SEQUENCE [LARGE SCALE GENOMIC DNA]</scope>
    <source>
        <strain>C57BL/6J</strain>
    </source>
</reference>
<reference key="4">
    <citation type="journal article" date="2001" name="Cell">
        <title>Loss of the Suv39h histone methyltransferases impairs mammalian heterochromatin and genome stability.</title>
        <authorList>
            <person name="Peters A.H.F.M."/>
            <person name="O'Carroll D."/>
            <person name="Scherthan H."/>
            <person name="Mechtler K."/>
            <person name="Sauer S."/>
            <person name="Schofer C."/>
            <person name="Weipoltshammer K."/>
            <person name="Pagani M."/>
            <person name="Lachner M."/>
            <person name="Kohlmaier A."/>
            <person name="Opravil S."/>
            <person name="Doyle M."/>
            <person name="Sibilia M."/>
            <person name="Jenuwein T."/>
        </authorList>
    </citation>
    <scope>FUNCTION</scope>
    <scope>DISRUPTION PHENOTYPE</scope>
</reference>
<reference key="5">
    <citation type="journal article" date="2003" name="Mol. Cell">
        <title>Partitioning and plasticity of repressive histone methylation states in mammalian chromatin.</title>
        <authorList>
            <person name="Peters A.H.F.M."/>
            <person name="Kubicek S."/>
            <person name="Mechtler K."/>
            <person name="O'Sullivan R.J."/>
            <person name="Derijck A.A."/>
            <person name="Perez-Burgos L."/>
            <person name="Kohlmaier A."/>
            <person name="Opravil S."/>
            <person name="Tachibana M."/>
            <person name="Shinkai Y."/>
            <person name="Martens J.H.A."/>
            <person name="Jenuwein T."/>
        </authorList>
    </citation>
    <scope>FUNCTION</scope>
</reference>
<reference key="6">
    <citation type="journal article" date="2003" name="Mol. Cell">
        <title>Histone methyltransferases direct different degrees of methylation to define distinct chromatin domains.</title>
        <authorList>
            <person name="Rice J.C."/>
            <person name="Briggs S.D."/>
            <person name="Ueberheide B."/>
            <person name="Barber C.M."/>
            <person name="Shabanowitz J."/>
            <person name="Hunt D.F."/>
            <person name="Shinkai Y."/>
            <person name="Allis C.D."/>
        </authorList>
    </citation>
    <scope>FUNCTION</scope>
</reference>
<reference key="7">
    <citation type="journal article" date="2004" name="Nat. Genet.">
        <title>Epigenetic regulation of telomere length in mammalian cells by the Suv39h1 and Suv39h2 histone methyltransferases.</title>
        <authorList>
            <person name="Garcia-Cao M."/>
            <person name="O'Sullivan R."/>
            <person name="Peters A.H.F.M."/>
            <person name="Jenuwein T."/>
            <person name="Blasco M.A."/>
        </authorList>
    </citation>
    <scope>FUNCTION</scope>
</reference>
<reference key="8">
    <citation type="journal article" date="2010" name="Cell">
        <title>A tissue-specific atlas of mouse protein phosphorylation and expression.</title>
        <authorList>
            <person name="Huttlin E.L."/>
            <person name="Jedrychowski M.P."/>
            <person name="Elias J.E."/>
            <person name="Goswami T."/>
            <person name="Rad R."/>
            <person name="Beausoleil S.A."/>
            <person name="Villen J."/>
            <person name="Haas W."/>
            <person name="Sowa M.E."/>
            <person name="Gygi S.P."/>
        </authorList>
    </citation>
    <scope>PHOSPHORYLATION [LARGE SCALE ANALYSIS] AT SER-455</scope>
    <scope>IDENTIFICATION BY MASS SPECTROMETRY [LARGE SCALE ANALYSIS]</scope>
    <source>
        <tissue>Testis</tissue>
    </source>
</reference>
<reference key="9">
    <citation type="journal article" date="2014" name="Nat. Struct. Mol. Biol.">
        <title>Temporal orchestration of repressive chromatin modifiers by circadian clock Period complexes.</title>
        <authorList>
            <person name="Duong H.A."/>
            <person name="Weitz C.J."/>
        </authorList>
    </citation>
    <scope>FUNCTION IN CIRCADIAN RHYTHMS</scope>
    <scope>IDENTIFICATION IN A LARGE PER COMPLEX</scope>
</reference>
<reference key="10">
    <citation type="journal article" date="2018" name="EMBO J.">
        <title>DCAF13 promotes pluripotency by negatively regulating SUV39H1 stability during early embryonic development.</title>
        <authorList>
            <person name="Zhang Y.L."/>
            <person name="Zhao L.W."/>
            <person name="Zhang J."/>
            <person name="Le R."/>
            <person name="Ji S.Y."/>
            <person name="Chen C."/>
            <person name="Gao Y."/>
            <person name="Li D."/>
            <person name="Gao S."/>
            <person name="Fan H.Y."/>
        </authorList>
    </citation>
    <scope>UBIQUITINATION</scope>
</reference>
<keyword id="KW-0090">Biological rhythms</keyword>
<keyword id="KW-0131">Cell cycle</keyword>
<keyword id="KW-0137">Centromere</keyword>
<keyword id="KW-0156">Chromatin regulator</keyword>
<keyword id="KW-0158">Chromosome</keyword>
<keyword id="KW-0221">Differentiation</keyword>
<keyword id="KW-0479">Metal-binding</keyword>
<keyword id="KW-0489">Methyltransferase</keyword>
<keyword id="KW-0539">Nucleus</keyword>
<keyword id="KW-0597">Phosphoprotein</keyword>
<keyword id="KW-1185">Reference proteome</keyword>
<keyword id="KW-0678">Repressor</keyword>
<keyword id="KW-0949">S-adenosyl-L-methionine</keyword>
<keyword id="KW-0804">Transcription</keyword>
<keyword id="KW-0805">Transcription regulation</keyword>
<keyword id="KW-0808">Transferase</keyword>
<keyword id="KW-0832">Ubl conjugation</keyword>
<keyword id="KW-0862">Zinc</keyword>
<proteinExistence type="evidence at protein level"/>
<protein>
    <recommendedName>
        <fullName>Histone-lysine N-methyltransferase SUV39H2</fullName>
        <ecNumber>2.1.1.355</ecNumber>
    </recommendedName>
    <alternativeName>
        <fullName>Histone H3-K9 methyltransferase 2</fullName>
        <shortName>H3-K9-HMTase 2</shortName>
    </alternativeName>
    <alternativeName>
        <fullName>Suppressor of variegation 3-9 homolog 2</fullName>
        <shortName>Su(var)3-9 homolog 2</shortName>
    </alternativeName>
</protein>